<accession>B8DHH0</accession>
<keyword id="KW-0378">Hydrolase</keyword>
<name>Y991_LISMH</name>
<sequence length="228" mass="24709">MKISFHGQSCIKIITGDTTILVDPFISGNEKCDLKAEEQMPDFIVLSHGHDDHVGDTVEIAKNSGATVICNADLASFLAVEDGLENMAPMHIGGKRQFSFGQVKLTQAFHGSQTVRDGRIVNLGFPTGIVFTIEDKNIYFAGDTGLFSDMKLIGELNPLDVAFLPIGDNFTMGPEDAAIAARFLQAKLVVPMHYNTFPLIAQDPHKFVASLDEGITGKVLEIGESIEI</sequence>
<protein>
    <recommendedName>
        <fullName evidence="1">UPF0173 metal-dependent hydrolase LMHCC_0991</fullName>
    </recommendedName>
</protein>
<proteinExistence type="inferred from homology"/>
<feature type="chain" id="PRO_1000197812" description="UPF0173 metal-dependent hydrolase LMHCC_0991">
    <location>
        <begin position="1"/>
        <end position="228"/>
    </location>
</feature>
<gene>
    <name type="ordered locus">LMHCC_0991</name>
</gene>
<organism>
    <name type="scientific">Listeria monocytogenes serotype 4a (strain HCC23)</name>
    <dbReference type="NCBI Taxonomy" id="552536"/>
    <lineage>
        <taxon>Bacteria</taxon>
        <taxon>Bacillati</taxon>
        <taxon>Bacillota</taxon>
        <taxon>Bacilli</taxon>
        <taxon>Bacillales</taxon>
        <taxon>Listeriaceae</taxon>
        <taxon>Listeria</taxon>
    </lineage>
</organism>
<dbReference type="EMBL" id="CP001175">
    <property type="protein sequence ID" value="ACK39339.1"/>
    <property type="molecule type" value="Genomic_DNA"/>
</dbReference>
<dbReference type="RefSeq" id="WP_003730621.1">
    <property type="nucleotide sequence ID" value="NC_011660.1"/>
</dbReference>
<dbReference type="SMR" id="B8DHH0"/>
<dbReference type="KEGG" id="lmh:LMHCC_0991"/>
<dbReference type="HOGENOM" id="CLU_070010_4_1_9"/>
<dbReference type="GO" id="GO:0016787">
    <property type="term" value="F:hydrolase activity"/>
    <property type="evidence" value="ECO:0007669"/>
    <property type="project" value="UniProtKB-UniRule"/>
</dbReference>
<dbReference type="Gene3D" id="3.60.15.10">
    <property type="entry name" value="Ribonuclease Z/Hydroxyacylglutathione hydrolase-like"/>
    <property type="match status" value="1"/>
</dbReference>
<dbReference type="HAMAP" id="MF_00457">
    <property type="entry name" value="UPF0173"/>
    <property type="match status" value="1"/>
</dbReference>
<dbReference type="InterPro" id="IPR001279">
    <property type="entry name" value="Metallo-B-lactamas"/>
</dbReference>
<dbReference type="InterPro" id="IPR036866">
    <property type="entry name" value="RibonucZ/Hydroxyglut_hydro"/>
</dbReference>
<dbReference type="InterPro" id="IPR022877">
    <property type="entry name" value="UPF0173"/>
</dbReference>
<dbReference type="InterPro" id="IPR050114">
    <property type="entry name" value="UPF0173_UPF0282_UlaG_hydrolase"/>
</dbReference>
<dbReference type="NCBIfam" id="NF001911">
    <property type="entry name" value="PRK00685.1"/>
    <property type="match status" value="1"/>
</dbReference>
<dbReference type="PANTHER" id="PTHR43546:SF3">
    <property type="entry name" value="UPF0173 METAL-DEPENDENT HYDROLASE MJ1163"/>
    <property type="match status" value="1"/>
</dbReference>
<dbReference type="PANTHER" id="PTHR43546">
    <property type="entry name" value="UPF0173 METAL-DEPENDENT HYDROLASE MJ1163-RELATED"/>
    <property type="match status" value="1"/>
</dbReference>
<dbReference type="Pfam" id="PF12706">
    <property type="entry name" value="Lactamase_B_2"/>
    <property type="match status" value="1"/>
</dbReference>
<dbReference type="SMART" id="SM00849">
    <property type="entry name" value="Lactamase_B"/>
    <property type="match status" value="1"/>
</dbReference>
<dbReference type="SUPFAM" id="SSF56281">
    <property type="entry name" value="Metallo-hydrolase/oxidoreductase"/>
    <property type="match status" value="1"/>
</dbReference>
<comment type="similarity">
    <text evidence="1">Belongs to the UPF0173 family.</text>
</comment>
<reference key="1">
    <citation type="journal article" date="2011" name="J. Bacteriol.">
        <title>Genome sequence of lineage III Listeria monocytogenes strain HCC23.</title>
        <authorList>
            <person name="Steele C.L."/>
            <person name="Donaldson J.R."/>
            <person name="Paul D."/>
            <person name="Banes M.M."/>
            <person name="Arick T."/>
            <person name="Bridges S.M."/>
            <person name="Lawrence M.L."/>
        </authorList>
    </citation>
    <scope>NUCLEOTIDE SEQUENCE [LARGE SCALE GENOMIC DNA]</scope>
    <source>
        <strain>HCC23</strain>
    </source>
</reference>
<evidence type="ECO:0000255" key="1">
    <source>
        <dbReference type="HAMAP-Rule" id="MF_00457"/>
    </source>
</evidence>